<evidence type="ECO:0000255" key="1">
    <source>
        <dbReference type="HAMAP-Rule" id="MF_00638"/>
    </source>
</evidence>
<evidence type="ECO:0000305" key="2"/>
<accession>Q9K5J7</accession>
<accession>Q6I2H9</accession>
<accession>Q6KWA7</accession>
<sequence>MMERFEKIEMKIPAKAEYVAIIRLTMAGVANRMGFAYDDIEDMKIAISEACTNIVQHAYKEDVGEIAIVFGLYENRLEIMVADNGVSFDFNNLRSKVGPYDISKPVEHLPENGLGLYLINTLMDDIQIMHDEGMTVLMTKYIQREQVENDGNPISTYESY</sequence>
<gene>
    <name evidence="1" type="primary">rsbW</name>
    <name type="ordered locus">BA_0991</name>
    <name type="ordered locus">GBAA_0991</name>
    <name type="ordered locus">BAS0927</name>
</gene>
<protein>
    <recommendedName>
        <fullName evidence="1">Serine-protein kinase RsbW</fullName>
        <ecNumber evidence="1">2.7.11.1</ecNumber>
    </recommendedName>
    <alternativeName>
        <fullName evidence="1">Anti-sigma-B factor</fullName>
    </alternativeName>
    <alternativeName>
        <fullName evidence="1">Sigma-B negative effector RsbW</fullName>
    </alternativeName>
</protein>
<feature type="chain" id="PRO_0000203525" description="Serine-protein kinase RsbW">
    <location>
        <begin position="1"/>
        <end position="160"/>
    </location>
</feature>
<keyword id="KW-0067">ATP-binding</keyword>
<keyword id="KW-0418">Kinase</keyword>
<keyword id="KW-0547">Nucleotide-binding</keyword>
<keyword id="KW-1185">Reference proteome</keyword>
<keyword id="KW-0723">Serine/threonine-protein kinase</keyword>
<keyword id="KW-0808">Transferase</keyword>
<dbReference type="EC" id="2.7.11.1" evidence="1"/>
<dbReference type="EMBL" id="AJ272497">
    <property type="protein sequence ID" value="CAB95033.1"/>
    <property type="status" value="ALT_INIT"/>
    <property type="molecule type" value="Genomic_DNA"/>
</dbReference>
<dbReference type="EMBL" id="AE016879">
    <property type="protein sequence ID" value="AAP24978.1"/>
    <property type="molecule type" value="Genomic_DNA"/>
</dbReference>
<dbReference type="EMBL" id="AE017334">
    <property type="protein sequence ID" value="AAT30094.1"/>
    <property type="molecule type" value="Genomic_DNA"/>
</dbReference>
<dbReference type="EMBL" id="AE017225">
    <property type="protein sequence ID" value="AAT53252.1"/>
    <property type="molecule type" value="Genomic_DNA"/>
</dbReference>
<dbReference type="RefSeq" id="NP_843492.1">
    <property type="nucleotide sequence ID" value="NC_003997.3"/>
</dbReference>
<dbReference type="RefSeq" id="WP_000970578.1">
    <property type="nucleotide sequence ID" value="NZ_WXXJ01000020.1"/>
</dbReference>
<dbReference type="RefSeq" id="YP_027201.1">
    <property type="nucleotide sequence ID" value="NC_005945.1"/>
</dbReference>
<dbReference type="SMR" id="Q9K5J7"/>
<dbReference type="IntAct" id="Q9K5J7">
    <property type="interactions" value="1"/>
</dbReference>
<dbReference type="STRING" id="261594.GBAA_0991"/>
<dbReference type="DNASU" id="1088183"/>
<dbReference type="GeneID" id="45021033"/>
<dbReference type="KEGG" id="ban:BA_0991"/>
<dbReference type="KEGG" id="bar:GBAA_0991"/>
<dbReference type="KEGG" id="bat:BAS0927"/>
<dbReference type="PATRIC" id="fig|198094.11.peg.982"/>
<dbReference type="eggNOG" id="COG2172">
    <property type="taxonomic scope" value="Bacteria"/>
</dbReference>
<dbReference type="HOGENOM" id="CLU_090336_11_1_9"/>
<dbReference type="OMA" id="KPEYVGV"/>
<dbReference type="OrthoDB" id="9798941at2"/>
<dbReference type="Proteomes" id="UP000000427">
    <property type="component" value="Chromosome"/>
</dbReference>
<dbReference type="Proteomes" id="UP000000594">
    <property type="component" value="Chromosome"/>
</dbReference>
<dbReference type="GO" id="GO:0005524">
    <property type="term" value="F:ATP binding"/>
    <property type="evidence" value="ECO:0007669"/>
    <property type="project" value="UniProtKB-KW"/>
</dbReference>
<dbReference type="GO" id="GO:0106310">
    <property type="term" value="F:protein serine kinase activity"/>
    <property type="evidence" value="ECO:0007669"/>
    <property type="project" value="RHEA"/>
</dbReference>
<dbReference type="GO" id="GO:0004674">
    <property type="term" value="F:protein serine/threonine kinase activity"/>
    <property type="evidence" value="ECO:0007669"/>
    <property type="project" value="UniProtKB-KW"/>
</dbReference>
<dbReference type="GO" id="GO:0016989">
    <property type="term" value="F:sigma factor antagonist activity"/>
    <property type="evidence" value="ECO:0007669"/>
    <property type="project" value="InterPro"/>
</dbReference>
<dbReference type="CDD" id="cd16936">
    <property type="entry name" value="HATPase_RsbW-like"/>
    <property type="match status" value="1"/>
</dbReference>
<dbReference type="FunFam" id="3.30.565.10:FF:000026">
    <property type="entry name" value="Serine-protein kinase RsbW"/>
    <property type="match status" value="1"/>
</dbReference>
<dbReference type="Gene3D" id="3.30.565.10">
    <property type="entry name" value="Histidine kinase-like ATPase, C-terminal domain"/>
    <property type="match status" value="1"/>
</dbReference>
<dbReference type="HAMAP" id="MF_00638">
    <property type="entry name" value="Anti_sigma_B"/>
    <property type="match status" value="1"/>
</dbReference>
<dbReference type="InterPro" id="IPR050267">
    <property type="entry name" value="Anti-sigma-factor_SerPK"/>
</dbReference>
<dbReference type="InterPro" id="IPR036890">
    <property type="entry name" value="HATPase_C_sf"/>
</dbReference>
<dbReference type="InterPro" id="IPR010193">
    <property type="entry name" value="RsbW"/>
</dbReference>
<dbReference type="NCBIfam" id="NF003144">
    <property type="entry name" value="PRK04069.1"/>
    <property type="match status" value="1"/>
</dbReference>
<dbReference type="NCBIfam" id="TIGR01924">
    <property type="entry name" value="rsbW_low_gc"/>
    <property type="match status" value="1"/>
</dbReference>
<dbReference type="PANTHER" id="PTHR35526">
    <property type="entry name" value="ANTI-SIGMA-F FACTOR RSBW-RELATED"/>
    <property type="match status" value="1"/>
</dbReference>
<dbReference type="PANTHER" id="PTHR35526:SF9">
    <property type="entry name" value="SERINE-PROTEIN KINASE RSBW"/>
    <property type="match status" value="1"/>
</dbReference>
<dbReference type="Pfam" id="PF13581">
    <property type="entry name" value="HATPase_c_2"/>
    <property type="match status" value="1"/>
</dbReference>
<dbReference type="SUPFAM" id="SSF55874">
    <property type="entry name" value="ATPase domain of HSP90 chaperone/DNA topoisomerase II/histidine kinase"/>
    <property type="match status" value="1"/>
</dbReference>
<organism>
    <name type="scientific">Bacillus anthracis</name>
    <dbReference type="NCBI Taxonomy" id="1392"/>
    <lineage>
        <taxon>Bacteria</taxon>
        <taxon>Bacillati</taxon>
        <taxon>Bacillota</taxon>
        <taxon>Bacilli</taxon>
        <taxon>Bacillales</taxon>
        <taxon>Bacillaceae</taxon>
        <taxon>Bacillus</taxon>
        <taxon>Bacillus cereus group</taxon>
    </lineage>
</organism>
<comment type="function">
    <text evidence="1">Negative regulator of sigma-B activity. Phosphorylates and inactivates its specific antagonist protein, RsbV. Upon phosphorylation of RsbV, RsbW is released and binds to sigma-B, thereby blocking its ability to form an RNA polymerase holoenzyme (E-sigma-B).</text>
</comment>
<comment type="catalytic activity">
    <reaction evidence="1">
        <text>L-seryl-[protein] + ATP = O-phospho-L-seryl-[protein] + ADP + H(+)</text>
        <dbReference type="Rhea" id="RHEA:17989"/>
        <dbReference type="Rhea" id="RHEA-COMP:9863"/>
        <dbReference type="Rhea" id="RHEA-COMP:11604"/>
        <dbReference type="ChEBI" id="CHEBI:15378"/>
        <dbReference type="ChEBI" id="CHEBI:29999"/>
        <dbReference type="ChEBI" id="CHEBI:30616"/>
        <dbReference type="ChEBI" id="CHEBI:83421"/>
        <dbReference type="ChEBI" id="CHEBI:456216"/>
        <dbReference type="EC" id="2.7.11.1"/>
    </reaction>
</comment>
<comment type="catalytic activity">
    <reaction evidence="1">
        <text>L-threonyl-[protein] + ATP = O-phospho-L-threonyl-[protein] + ADP + H(+)</text>
        <dbReference type="Rhea" id="RHEA:46608"/>
        <dbReference type="Rhea" id="RHEA-COMP:11060"/>
        <dbReference type="Rhea" id="RHEA-COMP:11605"/>
        <dbReference type="ChEBI" id="CHEBI:15378"/>
        <dbReference type="ChEBI" id="CHEBI:30013"/>
        <dbReference type="ChEBI" id="CHEBI:30616"/>
        <dbReference type="ChEBI" id="CHEBI:61977"/>
        <dbReference type="ChEBI" id="CHEBI:456216"/>
        <dbReference type="EC" id="2.7.11.1"/>
    </reaction>
</comment>
<comment type="similarity">
    <text evidence="1">Belongs to the anti-sigma-factor family.</text>
</comment>
<comment type="sequence caution" evidence="2">
    <conflict type="erroneous initiation">
        <sequence resource="EMBL-CDS" id="CAB95033"/>
    </conflict>
</comment>
<proteinExistence type="inferred from homology"/>
<reference key="1">
    <citation type="journal article" date="2000" name="J. Bacteriol.">
        <title>Characterization of the operon encoding the alternative sigma(B) factor from Bacillus anthracis and its role in virulence.</title>
        <authorList>
            <person name="Fouet A."/>
            <person name="Namy O."/>
            <person name="Lambert G."/>
        </authorList>
    </citation>
    <scope>NUCLEOTIDE SEQUENCE [GENOMIC DNA]</scope>
    <source>
        <strain>9131</strain>
    </source>
</reference>
<reference key="2">
    <citation type="journal article" date="2003" name="Nature">
        <title>The genome sequence of Bacillus anthracis Ames and comparison to closely related bacteria.</title>
        <authorList>
            <person name="Read T.D."/>
            <person name="Peterson S.N."/>
            <person name="Tourasse N.J."/>
            <person name="Baillie L.W."/>
            <person name="Paulsen I.T."/>
            <person name="Nelson K.E."/>
            <person name="Tettelin H."/>
            <person name="Fouts D.E."/>
            <person name="Eisen J.A."/>
            <person name="Gill S.R."/>
            <person name="Holtzapple E.K."/>
            <person name="Okstad O.A."/>
            <person name="Helgason E."/>
            <person name="Rilstone J."/>
            <person name="Wu M."/>
            <person name="Kolonay J.F."/>
            <person name="Beanan M.J."/>
            <person name="Dodson R.J."/>
            <person name="Brinkac L.M."/>
            <person name="Gwinn M.L."/>
            <person name="DeBoy R.T."/>
            <person name="Madpu R."/>
            <person name="Daugherty S.C."/>
            <person name="Durkin A.S."/>
            <person name="Haft D.H."/>
            <person name="Nelson W.C."/>
            <person name="Peterson J.D."/>
            <person name="Pop M."/>
            <person name="Khouri H.M."/>
            <person name="Radune D."/>
            <person name="Benton J.L."/>
            <person name="Mahamoud Y."/>
            <person name="Jiang L."/>
            <person name="Hance I.R."/>
            <person name="Weidman J.F."/>
            <person name="Berry K.J."/>
            <person name="Plaut R.D."/>
            <person name="Wolf A.M."/>
            <person name="Watkins K.L."/>
            <person name="Nierman W.C."/>
            <person name="Hazen A."/>
            <person name="Cline R.T."/>
            <person name="Redmond C."/>
            <person name="Thwaite J.E."/>
            <person name="White O."/>
            <person name="Salzberg S.L."/>
            <person name="Thomason B."/>
            <person name="Friedlander A.M."/>
            <person name="Koehler T.M."/>
            <person name="Hanna P.C."/>
            <person name="Kolstoe A.-B."/>
            <person name="Fraser C.M."/>
        </authorList>
    </citation>
    <scope>NUCLEOTIDE SEQUENCE [LARGE SCALE GENOMIC DNA]</scope>
    <source>
        <strain>Ames / isolate Porton</strain>
    </source>
</reference>
<reference key="3">
    <citation type="journal article" date="2009" name="J. Bacteriol.">
        <title>The complete genome sequence of Bacillus anthracis Ames 'Ancestor'.</title>
        <authorList>
            <person name="Ravel J."/>
            <person name="Jiang L."/>
            <person name="Stanley S.T."/>
            <person name="Wilson M.R."/>
            <person name="Decker R.S."/>
            <person name="Read T.D."/>
            <person name="Worsham P."/>
            <person name="Keim P.S."/>
            <person name="Salzberg S.L."/>
            <person name="Fraser-Liggett C.M."/>
            <person name="Rasko D.A."/>
        </authorList>
    </citation>
    <scope>NUCLEOTIDE SEQUENCE [LARGE SCALE GENOMIC DNA]</scope>
    <source>
        <strain>Ames ancestor</strain>
    </source>
</reference>
<reference key="4">
    <citation type="submission" date="2004-01" db="EMBL/GenBank/DDBJ databases">
        <title>Complete genome sequence of Bacillus anthracis Sterne.</title>
        <authorList>
            <person name="Brettin T.S."/>
            <person name="Bruce D."/>
            <person name="Challacombe J.F."/>
            <person name="Gilna P."/>
            <person name="Han C."/>
            <person name="Hill K."/>
            <person name="Hitchcock P."/>
            <person name="Jackson P."/>
            <person name="Keim P."/>
            <person name="Longmire J."/>
            <person name="Lucas S."/>
            <person name="Okinaka R."/>
            <person name="Richardson P."/>
            <person name="Rubin E."/>
            <person name="Tice H."/>
        </authorList>
    </citation>
    <scope>NUCLEOTIDE SEQUENCE [LARGE SCALE GENOMIC DNA]</scope>
    <source>
        <strain>Sterne</strain>
    </source>
</reference>
<name>RSBW_BACAN</name>